<protein>
    <recommendedName>
        <fullName>Probable nitronate monooxygenase</fullName>
        <shortName>NMO</shortName>
        <ecNumber evidence="2">1.13.12.-</ecNumber>
    </recommendedName>
    <alternativeName>
        <fullName>Propionate 3-nitronate monooxygenase</fullName>
        <shortName>P3N monooxygenase</shortName>
    </alternativeName>
</protein>
<reference key="1">
    <citation type="submission" date="2007-06" db="EMBL/GenBank/DDBJ databases">
        <title>Complete sequence of chromosome of Staphylococcus aureus subsp. aureus JH1.</title>
        <authorList>
            <consortium name="US DOE Joint Genome Institute"/>
            <person name="Copeland A."/>
            <person name="Lucas S."/>
            <person name="Lapidus A."/>
            <person name="Barry K."/>
            <person name="Detter J.C."/>
            <person name="Glavina del Rio T."/>
            <person name="Hammon N."/>
            <person name="Israni S."/>
            <person name="Dalin E."/>
            <person name="Tice H."/>
            <person name="Pitluck S."/>
            <person name="Chain P."/>
            <person name="Malfatti S."/>
            <person name="Shin M."/>
            <person name="Vergez L."/>
            <person name="Schmutz J."/>
            <person name="Larimer F."/>
            <person name="Land M."/>
            <person name="Hauser L."/>
            <person name="Kyrpides N."/>
            <person name="Ivanova N."/>
            <person name="Tomasz A."/>
            <person name="Richardson P."/>
        </authorList>
    </citation>
    <scope>NUCLEOTIDE SEQUENCE [LARGE SCALE GENOMIC DNA]</scope>
    <source>
        <strain>JH1</strain>
    </source>
</reference>
<sequence>MWNKNRLTQMLSIEYPIIQAGMAGSTTPKLVASVSNSGGLGTIGAGYFNTQQLEDEIDYVRQLTSNSFGVNVFVPSQQSYTSSQIENMNAWLKPYRRALHLEEPVVKIIEEQQFKCHIDTIIKKQVPVCCFTFGIPNESIIERLKEANIKLIGTATSVDEAIANEKAGMDAIVAQGSEAGGHRGSFLKPKNQLPMVGTISLVPQIVDVVSIPVIAAGGIMDGRGVLASIVLGAEGVQMGTAFLTSQDSNASELLRDAIINSKETDTVVTKAFSGKLARGINNRFIEEMSQYEGDIPDYPIQNELTSSIRKAAANIGDKELTHMWSGQSPRLATTHPANTIMSNIINQINQIMQYK</sequence>
<accession>A6U025</accession>
<keyword id="KW-0216">Detoxification</keyword>
<keyword id="KW-0285">Flavoprotein</keyword>
<keyword id="KW-0288">FMN</keyword>
<keyword id="KW-0503">Monooxygenase</keyword>
<keyword id="KW-0547">Nucleotide-binding</keyword>
<keyword id="KW-0560">Oxidoreductase</keyword>
<dbReference type="EC" id="1.13.12.-" evidence="2"/>
<dbReference type="EMBL" id="CP000736">
    <property type="protein sequence ID" value="ABR51793.1"/>
    <property type="molecule type" value="Genomic_DNA"/>
</dbReference>
<dbReference type="SMR" id="A6U025"/>
<dbReference type="KEGG" id="sah:SaurJH1_0937"/>
<dbReference type="HOGENOM" id="CLU_038732_5_1_9"/>
<dbReference type="GO" id="GO:0018580">
    <property type="term" value="F:nitronate monooxygenase activity"/>
    <property type="evidence" value="ECO:0007669"/>
    <property type="project" value="InterPro"/>
</dbReference>
<dbReference type="GO" id="GO:0000166">
    <property type="term" value="F:nucleotide binding"/>
    <property type="evidence" value="ECO:0007669"/>
    <property type="project" value="UniProtKB-KW"/>
</dbReference>
<dbReference type="GO" id="GO:0009636">
    <property type="term" value="P:response to toxic substance"/>
    <property type="evidence" value="ECO:0007669"/>
    <property type="project" value="UniProtKB-KW"/>
</dbReference>
<dbReference type="CDD" id="cd04730">
    <property type="entry name" value="NPD_like"/>
    <property type="match status" value="1"/>
</dbReference>
<dbReference type="FunFam" id="3.20.20.70:FF:000154">
    <property type="entry name" value="Probable nitronate monooxygenase"/>
    <property type="match status" value="1"/>
</dbReference>
<dbReference type="Gene3D" id="3.20.20.70">
    <property type="entry name" value="Aldolase class I"/>
    <property type="match status" value="1"/>
</dbReference>
<dbReference type="InterPro" id="IPR013785">
    <property type="entry name" value="Aldolase_TIM"/>
</dbReference>
<dbReference type="InterPro" id="IPR004136">
    <property type="entry name" value="NMO"/>
</dbReference>
<dbReference type="PANTHER" id="PTHR42747">
    <property type="entry name" value="NITRONATE MONOOXYGENASE-RELATED"/>
    <property type="match status" value="1"/>
</dbReference>
<dbReference type="PANTHER" id="PTHR42747:SF3">
    <property type="entry name" value="NITRONATE MONOOXYGENASE-RELATED"/>
    <property type="match status" value="1"/>
</dbReference>
<dbReference type="Pfam" id="PF03060">
    <property type="entry name" value="NMO"/>
    <property type="match status" value="1"/>
</dbReference>
<dbReference type="SUPFAM" id="SSF51412">
    <property type="entry name" value="Inosine monophosphate dehydrogenase (IMPDH)"/>
    <property type="match status" value="1"/>
</dbReference>
<comment type="function">
    <text evidence="2">Nitronate monooxygenase that uses molecular oxygen to catalyze the oxidative denitrification of alkyl nitronates. Acts on propionate 3-nitronate (P3N), the presumed physiological substrate. Probably functions in the detoxification of P3N, a metabolic poison produced by plants and fungi as a defense mechanism.</text>
</comment>
<comment type="catalytic activity">
    <reaction evidence="1">
        <text>3 propionate 3-nitronate + 3 O2 + H2O = 3 3-oxopropanoate + 2 nitrate + nitrite + H2O2 + 3 H(+)</text>
        <dbReference type="Rhea" id="RHEA:57332"/>
        <dbReference type="ChEBI" id="CHEBI:15377"/>
        <dbReference type="ChEBI" id="CHEBI:15378"/>
        <dbReference type="ChEBI" id="CHEBI:15379"/>
        <dbReference type="ChEBI" id="CHEBI:16240"/>
        <dbReference type="ChEBI" id="CHEBI:16301"/>
        <dbReference type="ChEBI" id="CHEBI:17632"/>
        <dbReference type="ChEBI" id="CHEBI:33190"/>
        <dbReference type="ChEBI" id="CHEBI:136067"/>
    </reaction>
</comment>
<comment type="cofactor">
    <cofactor evidence="2">
        <name>FMN</name>
        <dbReference type="ChEBI" id="CHEBI:58210"/>
    </cofactor>
    <text evidence="2">Binds 1 FMN per subunit.</text>
</comment>
<comment type="miscellaneous">
    <text evidence="3">P3N is a potent irreversible inhibitor of the key enzyme succinate dehydrogenase in the Krebs cycle and electron transport chain. P3N has been shown to be a toxic metabolite to bacteria, plants, fungi, mammals or any organism that uses succinate dehydrogenase.</text>
</comment>
<comment type="similarity">
    <text evidence="3">Belongs to the nitronate monooxygenase family. NMO class I subfamily.</text>
</comment>
<name>NMO_STAA2</name>
<evidence type="ECO:0000250" key="1">
    <source>
        <dbReference type="UniProtKB" id="D0V3Y4"/>
    </source>
</evidence>
<evidence type="ECO:0000250" key="2">
    <source>
        <dbReference type="UniProtKB" id="Q9HWH9"/>
    </source>
</evidence>
<evidence type="ECO:0000305" key="3"/>
<organism>
    <name type="scientific">Staphylococcus aureus (strain JH1)</name>
    <dbReference type="NCBI Taxonomy" id="359787"/>
    <lineage>
        <taxon>Bacteria</taxon>
        <taxon>Bacillati</taxon>
        <taxon>Bacillota</taxon>
        <taxon>Bacilli</taxon>
        <taxon>Bacillales</taxon>
        <taxon>Staphylococcaceae</taxon>
        <taxon>Staphylococcus</taxon>
    </lineage>
</organism>
<feature type="chain" id="PRO_0000360892" description="Probable nitronate monooxygenase">
    <location>
        <begin position="1"/>
        <end position="355"/>
    </location>
</feature>
<feature type="binding site" evidence="2">
    <location>
        <position position="71"/>
    </location>
    <ligand>
        <name>FMN</name>
        <dbReference type="ChEBI" id="CHEBI:58210"/>
    </ligand>
</feature>
<feature type="binding site" evidence="2">
    <location>
        <position position="175"/>
    </location>
    <ligand>
        <name>FMN</name>
        <dbReference type="ChEBI" id="CHEBI:58210"/>
    </ligand>
</feature>
<feature type="binding site" evidence="2">
    <location>
        <position position="180"/>
    </location>
    <ligand>
        <name>FMN</name>
        <dbReference type="ChEBI" id="CHEBI:58210"/>
    </ligand>
</feature>
<feature type="binding site" evidence="2">
    <location>
        <position position="218"/>
    </location>
    <ligand>
        <name>FMN</name>
        <dbReference type="ChEBI" id="CHEBI:58210"/>
    </ligand>
</feature>
<feature type="binding site" evidence="2">
    <location>
        <begin position="237"/>
        <end position="240"/>
    </location>
    <ligand>
        <name>FMN</name>
        <dbReference type="ChEBI" id="CHEBI:58210"/>
    </ligand>
</feature>
<proteinExistence type="inferred from homology"/>
<gene>
    <name type="ordered locus">SaurJH1_0937</name>
</gene>